<reference key="1">
    <citation type="submission" date="2007-02" db="EMBL/GenBank/DDBJ databases">
        <title>Complete sequence of chromosome of Shewanella baltica OS155.</title>
        <authorList>
            <consortium name="US DOE Joint Genome Institute"/>
            <person name="Copeland A."/>
            <person name="Lucas S."/>
            <person name="Lapidus A."/>
            <person name="Barry K."/>
            <person name="Detter J.C."/>
            <person name="Glavina del Rio T."/>
            <person name="Hammon N."/>
            <person name="Israni S."/>
            <person name="Dalin E."/>
            <person name="Tice H."/>
            <person name="Pitluck S."/>
            <person name="Sims D.R."/>
            <person name="Brettin T."/>
            <person name="Bruce D."/>
            <person name="Han C."/>
            <person name="Tapia R."/>
            <person name="Brainard J."/>
            <person name="Schmutz J."/>
            <person name="Larimer F."/>
            <person name="Land M."/>
            <person name="Hauser L."/>
            <person name="Kyrpides N."/>
            <person name="Mikhailova N."/>
            <person name="Brettar I."/>
            <person name="Klappenbach J."/>
            <person name="Konstantinidis K."/>
            <person name="Rodrigues J."/>
            <person name="Tiedje J."/>
            <person name="Richardson P."/>
        </authorList>
    </citation>
    <scope>NUCLEOTIDE SEQUENCE [LARGE SCALE GENOMIC DNA]</scope>
    <source>
        <strain>OS155 / ATCC BAA-1091</strain>
    </source>
</reference>
<organism>
    <name type="scientific">Shewanella baltica (strain OS155 / ATCC BAA-1091)</name>
    <dbReference type="NCBI Taxonomy" id="325240"/>
    <lineage>
        <taxon>Bacteria</taxon>
        <taxon>Pseudomonadati</taxon>
        <taxon>Pseudomonadota</taxon>
        <taxon>Gammaproteobacteria</taxon>
        <taxon>Alteromonadales</taxon>
        <taxon>Shewanellaceae</taxon>
        <taxon>Shewanella</taxon>
    </lineage>
</organism>
<name>ACKA_SHEB5</name>
<evidence type="ECO:0000255" key="1">
    <source>
        <dbReference type="HAMAP-Rule" id="MF_00020"/>
    </source>
</evidence>
<accession>A3D600</accession>
<protein>
    <recommendedName>
        <fullName evidence="1">Acetate kinase</fullName>
        <ecNumber evidence="1">2.7.2.1</ecNumber>
    </recommendedName>
    <alternativeName>
        <fullName evidence="1">Acetokinase</fullName>
    </alternativeName>
</protein>
<dbReference type="EC" id="2.7.2.1" evidence="1"/>
<dbReference type="EMBL" id="CP000563">
    <property type="protein sequence ID" value="ABN62163.1"/>
    <property type="molecule type" value="Genomic_DNA"/>
</dbReference>
<dbReference type="RefSeq" id="WP_006082161.1">
    <property type="nucleotide sequence ID" value="NC_009052.1"/>
</dbReference>
<dbReference type="SMR" id="A3D600"/>
<dbReference type="STRING" id="325240.Sbal_2674"/>
<dbReference type="GeneID" id="11772866"/>
<dbReference type="KEGG" id="sbl:Sbal_2674"/>
<dbReference type="HOGENOM" id="CLU_020352_0_1_6"/>
<dbReference type="OrthoDB" id="9802453at2"/>
<dbReference type="UniPathway" id="UPA00340">
    <property type="reaction ID" value="UER00458"/>
</dbReference>
<dbReference type="Proteomes" id="UP000001557">
    <property type="component" value="Chromosome"/>
</dbReference>
<dbReference type="GO" id="GO:0005829">
    <property type="term" value="C:cytosol"/>
    <property type="evidence" value="ECO:0007669"/>
    <property type="project" value="TreeGrafter"/>
</dbReference>
<dbReference type="GO" id="GO:0008776">
    <property type="term" value="F:acetate kinase activity"/>
    <property type="evidence" value="ECO:0007669"/>
    <property type="project" value="UniProtKB-UniRule"/>
</dbReference>
<dbReference type="GO" id="GO:0005524">
    <property type="term" value="F:ATP binding"/>
    <property type="evidence" value="ECO:0007669"/>
    <property type="project" value="UniProtKB-KW"/>
</dbReference>
<dbReference type="GO" id="GO:0000287">
    <property type="term" value="F:magnesium ion binding"/>
    <property type="evidence" value="ECO:0007669"/>
    <property type="project" value="UniProtKB-UniRule"/>
</dbReference>
<dbReference type="GO" id="GO:0006083">
    <property type="term" value="P:acetate metabolic process"/>
    <property type="evidence" value="ECO:0007669"/>
    <property type="project" value="TreeGrafter"/>
</dbReference>
<dbReference type="GO" id="GO:0006085">
    <property type="term" value="P:acetyl-CoA biosynthetic process"/>
    <property type="evidence" value="ECO:0007669"/>
    <property type="project" value="UniProtKB-UniRule"/>
</dbReference>
<dbReference type="CDD" id="cd24010">
    <property type="entry name" value="ASKHA_NBD_AcK_PK"/>
    <property type="match status" value="1"/>
</dbReference>
<dbReference type="FunFam" id="3.30.420.40:FF:000041">
    <property type="entry name" value="Acetate kinase"/>
    <property type="match status" value="1"/>
</dbReference>
<dbReference type="Gene3D" id="3.30.420.40">
    <property type="match status" value="2"/>
</dbReference>
<dbReference type="HAMAP" id="MF_00020">
    <property type="entry name" value="Acetate_kinase"/>
    <property type="match status" value="1"/>
</dbReference>
<dbReference type="InterPro" id="IPR004372">
    <property type="entry name" value="Ac/propionate_kinase"/>
</dbReference>
<dbReference type="InterPro" id="IPR000890">
    <property type="entry name" value="Aliphatic_acid_kin_short-chain"/>
</dbReference>
<dbReference type="InterPro" id="IPR023865">
    <property type="entry name" value="Aliphatic_acid_kinase_CS"/>
</dbReference>
<dbReference type="InterPro" id="IPR043129">
    <property type="entry name" value="ATPase_NBD"/>
</dbReference>
<dbReference type="NCBIfam" id="TIGR00016">
    <property type="entry name" value="ackA"/>
    <property type="match status" value="1"/>
</dbReference>
<dbReference type="PANTHER" id="PTHR21060">
    <property type="entry name" value="ACETATE KINASE"/>
    <property type="match status" value="1"/>
</dbReference>
<dbReference type="PANTHER" id="PTHR21060:SF21">
    <property type="entry name" value="ACETATE KINASE"/>
    <property type="match status" value="1"/>
</dbReference>
<dbReference type="Pfam" id="PF00871">
    <property type="entry name" value="Acetate_kinase"/>
    <property type="match status" value="1"/>
</dbReference>
<dbReference type="PIRSF" id="PIRSF000722">
    <property type="entry name" value="Acetate_prop_kin"/>
    <property type="match status" value="1"/>
</dbReference>
<dbReference type="PRINTS" id="PR00471">
    <property type="entry name" value="ACETATEKNASE"/>
</dbReference>
<dbReference type="SUPFAM" id="SSF53067">
    <property type="entry name" value="Actin-like ATPase domain"/>
    <property type="match status" value="2"/>
</dbReference>
<dbReference type="PROSITE" id="PS01075">
    <property type="entry name" value="ACETATE_KINASE_1"/>
    <property type="match status" value="1"/>
</dbReference>
<dbReference type="PROSITE" id="PS01076">
    <property type="entry name" value="ACETATE_KINASE_2"/>
    <property type="match status" value="1"/>
</dbReference>
<feature type="chain" id="PRO_1000002252" description="Acetate kinase">
    <location>
        <begin position="1"/>
        <end position="399"/>
    </location>
</feature>
<feature type="active site" description="Proton donor/acceptor" evidence="1">
    <location>
        <position position="148"/>
    </location>
</feature>
<feature type="binding site" evidence="1">
    <location>
        <position position="10"/>
    </location>
    <ligand>
        <name>Mg(2+)</name>
        <dbReference type="ChEBI" id="CHEBI:18420"/>
    </ligand>
</feature>
<feature type="binding site" evidence="1">
    <location>
        <position position="17"/>
    </location>
    <ligand>
        <name>ATP</name>
        <dbReference type="ChEBI" id="CHEBI:30616"/>
    </ligand>
</feature>
<feature type="binding site" evidence="1">
    <location>
        <position position="91"/>
    </location>
    <ligand>
        <name>substrate</name>
    </ligand>
</feature>
<feature type="binding site" evidence="1">
    <location>
        <begin position="208"/>
        <end position="212"/>
    </location>
    <ligand>
        <name>ATP</name>
        <dbReference type="ChEBI" id="CHEBI:30616"/>
    </ligand>
</feature>
<feature type="binding site" evidence="1">
    <location>
        <begin position="283"/>
        <end position="285"/>
    </location>
    <ligand>
        <name>ATP</name>
        <dbReference type="ChEBI" id="CHEBI:30616"/>
    </ligand>
</feature>
<feature type="binding site" evidence="1">
    <location>
        <begin position="331"/>
        <end position="335"/>
    </location>
    <ligand>
        <name>ATP</name>
        <dbReference type="ChEBI" id="CHEBI:30616"/>
    </ligand>
</feature>
<feature type="binding site" evidence="1">
    <location>
        <position position="385"/>
    </location>
    <ligand>
        <name>Mg(2+)</name>
        <dbReference type="ChEBI" id="CHEBI:18420"/>
    </ligand>
</feature>
<feature type="site" description="Transition state stabilizer" evidence="1">
    <location>
        <position position="180"/>
    </location>
</feature>
<feature type="site" description="Transition state stabilizer" evidence="1">
    <location>
        <position position="241"/>
    </location>
</feature>
<gene>
    <name evidence="1" type="primary">ackA</name>
    <name type="ordered locus">Sbal_2674</name>
</gene>
<proteinExistence type="inferred from homology"/>
<comment type="function">
    <text evidence="1">Catalyzes the formation of acetyl phosphate from acetate and ATP. Can also catalyze the reverse reaction.</text>
</comment>
<comment type="catalytic activity">
    <reaction evidence="1">
        <text>acetate + ATP = acetyl phosphate + ADP</text>
        <dbReference type="Rhea" id="RHEA:11352"/>
        <dbReference type="ChEBI" id="CHEBI:22191"/>
        <dbReference type="ChEBI" id="CHEBI:30089"/>
        <dbReference type="ChEBI" id="CHEBI:30616"/>
        <dbReference type="ChEBI" id="CHEBI:456216"/>
        <dbReference type="EC" id="2.7.2.1"/>
    </reaction>
</comment>
<comment type="cofactor">
    <cofactor evidence="1">
        <name>Mg(2+)</name>
        <dbReference type="ChEBI" id="CHEBI:18420"/>
    </cofactor>
    <cofactor evidence="1">
        <name>Mn(2+)</name>
        <dbReference type="ChEBI" id="CHEBI:29035"/>
    </cofactor>
    <text evidence="1">Mg(2+). Can also accept Mn(2+).</text>
</comment>
<comment type="pathway">
    <text evidence="1">Metabolic intermediate biosynthesis; acetyl-CoA biosynthesis; acetyl-CoA from acetate: step 1/2.</text>
</comment>
<comment type="subunit">
    <text evidence="1">Homodimer.</text>
</comment>
<comment type="subcellular location">
    <subcellularLocation>
        <location evidence="1">Cytoplasm</location>
    </subcellularLocation>
</comment>
<comment type="similarity">
    <text evidence="1">Belongs to the acetokinase family.</text>
</comment>
<sequence length="399" mass="43600">MSNNLVLVLNCGSSSLKFAVIDAQTGDDQISGLAECFGLEDSRIKWKINGEKHEAALGAFTAHREAVEYIVNKILAEQPELAAKIQAVGHRIVHGGEKFTRSVIIDESVIKGIEDCASLAPLHNPAHLIGIRAAIASFPKLPQVAVFDTAFHQSMPDRAYVYALPYKLYREHGIRRYGMHGTSHLFVSREAAKMLNKPIEETNVICAHLGNGASVTAIKGGKSVDTSMGLTPLEGLVMGTRCGDIDPSIIYHLVHQLGYTLEEVNNLMNKQSGLLGISELTNDCRGIEEGYADGHKGATLALEIFCYRLAKYIASYTVPLGRLDAVVFTGGIGENSDLIREKVLNMLEIFNFHVDSERNKAARFGKKGIITQDKGTIAMVIPTNEEWVIAEDSIKLINK</sequence>
<keyword id="KW-0067">ATP-binding</keyword>
<keyword id="KW-0963">Cytoplasm</keyword>
<keyword id="KW-0418">Kinase</keyword>
<keyword id="KW-0460">Magnesium</keyword>
<keyword id="KW-0479">Metal-binding</keyword>
<keyword id="KW-0547">Nucleotide-binding</keyword>
<keyword id="KW-1185">Reference proteome</keyword>
<keyword id="KW-0808">Transferase</keyword>